<accession>A5FNG4</accession>
<sequence>MEIQSNFSLKNYNTFGIEAKAKQFIAVHSVEELKTILKENKNEKKFILGGGSNMLLTKDIDALVIHIDLKGKEIIKEDDDFVWVESQAGETWHDFVLWTIDNNFGGLENMSLIPGNVGTTPVQNIGAYGTEIKDTFVSCNAINIETQETKTFTNAECNFGYRESIFKNEVKDQFIITSVIYKLTKRNHKINTSYGDILAELAKNNISEPTLKDVSNAVIAIRQSKLPDPKELGNSGSFFKNPILLKSDFEQIHKKFPEMKFYEVSETEVKVPAGWLIEQAGFKGKRFGDAGVHKNQALVLVNYGNATGQEILNVSKEVQKTVFETFGIKIEAEVNVI</sequence>
<organism>
    <name type="scientific">Flavobacterium johnsoniae (strain ATCC 17061 / DSM 2064 / JCM 8514 / BCRC 14874 / CCUG 350202 / NBRC 14942 / NCIMB 11054 / UW101)</name>
    <name type="common">Cytophaga johnsonae</name>
    <dbReference type="NCBI Taxonomy" id="376686"/>
    <lineage>
        <taxon>Bacteria</taxon>
        <taxon>Pseudomonadati</taxon>
        <taxon>Bacteroidota</taxon>
        <taxon>Flavobacteriia</taxon>
        <taxon>Flavobacteriales</taxon>
        <taxon>Flavobacteriaceae</taxon>
        <taxon>Flavobacterium</taxon>
    </lineage>
</organism>
<evidence type="ECO:0000255" key="1">
    <source>
        <dbReference type="HAMAP-Rule" id="MF_00037"/>
    </source>
</evidence>
<comment type="function">
    <text evidence="1">Cell wall formation.</text>
</comment>
<comment type="catalytic activity">
    <reaction evidence="1">
        <text>UDP-N-acetyl-alpha-D-muramate + NADP(+) = UDP-N-acetyl-3-O-(1-carboxyvinyl)-alpha-D-glucosamine + NADPH + H(+)</text>
        <dbReference type="Rhea" id="RHEA:12248"/>
        <dbReference type="ChEBI" id="CHEBI:15378"/>
        <dbReference type="ChEBI" id="CHEBI:57783"/>
        <dbReference type="ChEBI" id="CHEBI:58349"/>
        <dbReference type="ChEBI" id="CHEBI:68483"/>
        <dbReference type="ChEBI" id="CHEBI:70757"/>
        <dbReference type="EC" id="1.3.1.98"/>
    </reaction>
</comment>
<comment type="cofactor">
    <cofactor evidence="1">
        <name>FAD</name>
        <dbReference type="ChEBI" id="CHEBI:57692"/>
    </cofactor>
</comment>
<comment type="pathway">
    <text evidence="1">Cell wall biogenesis; peptidoglycan biosynthesis.</text>
</comment>
<comment type="subcellular location">
    <subcellularLocation>
        <location evidence="1">Cytoplasm</location>
    </subcellularLocation>
</comment>
<comment type="similarity">
    <text evidence="1">Belongs to the MurB family.</text>
</comment>
<keyword id="KW-0131">Cell cycle</keyword>
<keyword id="KW-0132">Cell division</keyword>
<keyword id="KW-0133">Cell shape</keyword>
<keyword id="KW-0961">Cell wall biogenesis/degradation</keyword>
<keyword id="KW-0963">Cytoplasm</keyword>
<keyword id="KW-0274">FAD</keyword>
<keyword id="KW-0285">Flavoprotein</keyword>
<keyword id="KW-0521">NADP</keyword>
<keyword id="KW-0560">Oxidoreductase</keyword>
<keyword id="KW-0573">Peptidoglycan synthesis</keyword>
<protein>
    <recommendedName>
        <fullName evidence="1">UDP-N-acetylenolpyruvoylglucosamine reductase</fullName>
        <ecNumber evidence="1">1.3.1.98</ecNumber>
    </recommendedName>
    <alternativeName>
        <fullName evidence="1">UDP-N-acetylmuramate dehydrogenase</fullName>
    </alternativeName>
</protein>
<name>MURB_FLAJ1</name>
<reference key="1">
    <citation type="journal article" date="2009" name="Appl. Environ. Microbiol.">
        <title>Novel features of the polysaccharide-digesting gliding bacterium Flavobacterium johnsoniae as revealed by genome sequence analysis.</title>
        <authorList>
            <person name="McBride M.J."/>
            <person name="Xie G."/>
            <person name="Martens E.C."/>
            <person name="Lapidus A."/>
            <person name="Henrissat B."/>
            <person name="Rhodes R.G."/>
            <person name="Goltsman E."/>
            <person name="Wang W."/>
            <person name="Xu J."/>
            <person name="Hunnicutt D.W."/>
            <person name="Staroscik A.M."/>
            <person name="Hoover T.R."/>
            <person name="Cheng Y.Q."/>
            <person name="Stein J.L."/>
        </authorList>
    </citation>
    <scope>NUCLEOTIDE SEQUENCE [LARGE SCALE GENOMIC DNA]</scope>
    <source>
        <strain>ATCC 17061 / DSM 2064 / JCM 8514 / BCRC 14874 / CCUG 350202 / NBRC 14942 / NCIMB 11054 / UW101</strain>
    </source>
</reference>
<dbReference type="EC" id="1.3.1.98" evidence="1"/>
<dbReference type="EMBL" id="CP000685">
    <property type="protein sequence ID" value="ABQ03255.1"/>
    <property type="molecule type" value="Genomic_DNA"/>
</dbReference>
<dbReference type="RefSeq" id="WP_012022326.1">
    <property type="nucleotide sequence ID" value="NC_009441.1"/>
</dbReference>
<dbReference type="SMR" id="A5FNG4"/>
<dbReference type="STRING" id="376686.Fjoh_0218"/>
<dbReference type="KEGG" id="fjo:Fjoh_0218"/>
<dbReference type="eggNOG" id="COG0812">
    <property type="taxonomic scope" value="Bacteria"/>
</dbReference>
<dbReference type="HOGENOM" id="CLU_035304_0_0_10"/>
<dbReference type="OrthoDB" id="9804753at2"/>
<dbReference type="UniPathway" id="UPA00219"/>
<dbReference type="Proteomes" id="UP000006694">
    <property type="component" value="Chromosome"/>
</dbReference>
<dbReference type="GO" id="GO:0005829">
    <property type="term" value="C:cytosol"/>
    <property type="evidence" value="ECO:0007669"/>
    <property type="project" value="TreeGrafter"/>
</dbReference>
<dbReference type="GO" id="GO:0071949">
    <property type="term" value="F:FAD binding"/>
    <property type="evidence" value="ECO:0007669"/>
    <property type="project" value="InterPro"/>
</dbReference>
<dbReference type="GO" id="GO:0008762">
    <property type="term" value="F:UDP-N-acetylmuramate dehydrogenase activity"/>
    <property type="evidence" value="ECO:0007669"/>
    <property type="project" value="UniProtKB-UniRule"/>
</dbReference>
<dbReference type="GO" id="GO:0051301">
    <property type="term" value="P:cell division"/>
    <property type="evidence" value="ECO:0007669"/>
    <property type="project" value="UniProtKB-KW"/>
</dbReference>
<dbReference type="GO" id="GO:0071555">
    <property type="term" value="P:cell wall organization"/>
    <property type="evidence" value="ECO:0007669"/>
    <property type="project" value="UniProtKB-KW"/>
</dbReference>
<dbReference type="GO" id="GO:0009252">
    <property type="term" value="P:peptidoglycan biosynthetic process"/>
    <property type="evidence" value="ECO:0007669"/>
    <property type="project" value="UniProtKB-UniRule"/>
</dbReference>
<dbReference type="GO" id="GO:0008360">
    <property type="term" value="P:regulation of cell shape"/>
    <property type="evidence" value="ECO:0007669"/>
    <property type="project" value="UniProtKB-KW"/>
</dbReference>
<dbReference type="Gene3D" id="3.30.465.10">
    <property type="match status" value="1"/>
</dbReference>
<dbReference type="Gene3D" id="3.90.78.10">
    <property type="entry name" value="UDP-N-acetylenolpyruvoylglucosamine reductase, C-terminal domain"/>
    <property type="match status" value="1"/>
</dbReference>
<dbReference type="Gene3D" id="3.30.43.10">
    <property type="entry name" value="Uridine Diphospho-n-acetylenolpyruvylglucosamine Reductase, domain 2"/>
    <property type="match status" value="1"/>
</dbReference>
<dbReference type="HAMAP" id="MF_00037">
    <property type="entry name" value="MurB"/>
    <property type="match status" value="1"/>
</dbReference>
<dbReference type="InterPro" id="IPR016166">
    <property type="entry name" value="FAD-bd_PCMH"/>
</dbReference>
<dbReference type="InterPro" id="IPR036318">
    <property type="entry name" value="FAD-bd_PCMH-like_sf"/>
</dbReference>
<dbReference type="InterPro" id="IPR016167">
    <property type="entry name" value="FAD-bd_PCMH_sub1"/>
</dbReference>
<dbReference type="InterPro" id="IPR016169">
    <property type="entry name" value="FAD-bd_PCMH_sub2"/>
</dbReference>
<dbReference type="InterPro" id="IPR003170">
    <property type="entry name" value="MurB"/>
</dbReference>
<dbReference type="InterPro" id="IPR011601">
    <property type="entry name" value="MurB_C"/>
</dbReference>
<dbReference type="InterPro" id="IPR036635">
    <property type="entry name" value="MurB_C_sf"/>
</dbReference>
<dbReference type="InterPro" id="IPR006094">
    <property type="entry name" value="Oxid_FAD_bind_N"/>
</dbReference>
<dbReference type="NCBIfam" id="TIGR00179">
    <property type="entry name" value="murB"/>
    <property type="match status" value="1"/>
</dbReference>
<dbReference type="NCBIfam" id="NF000755">
    <property type="entry name" value="PRK00046.1"/>
    <property type="match status" value="1"/>
</dbReference>
<dbReference type="NCBIfam" id="NF010478">
    <property type="entry name" value="PRK13903.1"/>
    <property type="match status" value="1"/>
</dbReference>
<dbReference type="PANTHER" id="PTHR21071">
    <property type="entry name" value="UDP-N-ACETYLENOLPYRUVOYLGLUCOSAMINE REDUCTASE"/>
    <property type="match status" value="1"/>
</dbReference>
<dbReference type="PANTHER" id="PTHR21071:SF4">
    <property type="entry name" value="UDP-N-ACETYLENOLPYRUVOYLGLUCOSAMINE REDUCTASE"/>
    <property type="match status" value="1"/>
</dbReference>
<dbReference type="Pfam" id="PF01565">
    <property type="entry name" value="FAD_binding_4"/>
    <property type="match status" value="1"/>
</dbReference>
<dbReference type="Pfam" id="PF02873">
    <property type="entry name" value="MurB_C"/>
    <property type="match status" value="1"/>
</dbReference>
<dbReference type="SUPFAM" id="SSF56176">
    <property type="entry name" value="FAD-binding/transporter-associated domain-like"/>
    <property type="match status" value="1"/>
</dbReference>
<dbReference type="SUPFAM" id="SSF56194">
    <property type="entry name" value="Uridine diphospho-N-Acetylenolpyruvylglucosamine reductase, MurB, C-terminal domain"/>
    <property type="match status" value="1"/>
</dbReference>
<dbReference type="PROSITE" id="PS51387">
    <property type="entry name" value="FAD_PCMH"/>
    <property type="match status" value="1"/>
</dbReference>
<gene>
    <name evidence="1" type="primary">murB</name>
    <name type="ordered locus">Fjoh_0218</name>
</gene>
<feature type="chain" id="PRO_1000074523" description="UDP-N-acetylenolpyruvoylglucosamine reductase">
    <location>
        <begin position="1"/>
        <end position="337"/>
    </location>
</feature>
<feature type="domain" description="FAD-binding PCMH-type" evidence="1">
    <location>
        <begin position="17"/>
        <end position="186"/>
    </location>
</feature>
<feature type="active site" evidence="1">
    <location>
        <position position="162"/>
    </location>
</feature>
<feature type="active site" description="Proton donor" evidence="1">
    <location>
        <position position="237"/>
    </location>
</feature>
<feature type="active site" evidence="1">
    <location>
        <position position="333"/>
    </location>
</feature>
<proteinExistence type="inferred from homology"/>